<evidence type="ECO:0000250" key="1"/>
<evidence type="ECO:0000250" key="2">
    <source>
        <dbReference type="UniProtKB" id="P07108"/>
    </source>
</evidence>
<evidence type="ECO:0000250" key="3">
    <source>
        <dbReference type="UniProtKB" id="P31786"/>
    </source>
</evidence>
<evidence type="ECO:0000255" key="4">
    <source>
        <dbReference type="PROSITE-ProRule" id="PRU00573"/>
    </source>
</evidence>
<evidence type="ECO:0000269" key="5">
    <source>
    </source>
</evidence>
<evidence type="ECO:0000269" key="6">
    <source>
    </source>
</evidence>
<evidence type="ECO:0000269" key="7">
    <source>
    </source>
</evidence>
<evidence type="ECO:0000269" key="8">
    <source>
    </source>
</evidence>
<evidence type="ECO:0000269" key="9">
    <source>
    </source>
</evidence>
<evidence type="ECO:0000269" key="10">
    <source>
    </source>
</evidence>
<evidence type="ECO:0000269" key="11">
    <source ref="12"/>
</evidence>
<evidence type="ECO:0000305" key="12"/>
<evidence type="ECO:0007744" key="13">
    <source>
        <dbReference type="PDB" id="1ACA"/>
    </source>
</evidence>
<evidence type="ECO:0007744" key="14">
    <source>
        <dbReference type="PDB" id="1NVL"/>
    </source>
</evidence>
<evidence type="ECO:0007829" key="15">
    <source>
        <dbReference type="PDB" id="1ACA"/>
    </source>
</evidence>
<evidence type="ECO:0007829" key="16">
    <source>
        <dbReference type="PDB" id="1HB6"/>
    </source>
</evidence>
<keyword id="KW-0002">3D-structure</keyword>
<keyword id="KW-0007">Acetylation</keyword>
<keyword id="KW-0903">Direct protein sequencing</keyword>
<keyword id="KW-0256">Endoplasmic reticulum</keyword>
<keyword id="KW-0333">Golgi apparatus</keyword>
<keyword id="KW-0379">Hydroxylation</keyword>
<keyword id="KW-0446">Lipid-binding</keyword>
<keyword id="KW-0597">Phosphoprotein</keyword>
<keyword id="KW-1185">Reference proteome</keyword>
<keyword id="KW-0813">Transport</keyword>
<protein>
    <recommendedName>
        <fullName>Acyl-CoA-binding protein</fullName>
        <shortName>ACBP</shortName>
    </recommendedName>
    <alternativeName>
        <fullName>Diazepam-binding inhibitor</fullName>
        <shortName>DBI</shortName>
    </alternativeName>
    <alternativeName>
        <fullName>Endozepine</fullName>
        <shortName>EP</shortName>
    </alternativeName>
</protein>
<organism>
    <name type="scientific">Bos taurus</name>
    <name type="common">Bovine</name>
    <dbReference type="NCBI Taxonomy" id="9913"/>
    <lineage>
        <taxon>Eukaryota</taxon>
        <taxon>Metazoa</taxon>
        <taxon>Chordata</taxon>
        <taxon>Craniata</taxon>
        <taxon>Vertebrata</taxon>
        <taxon>Euteleostomi</taxon>
        <taxon>Mammalia</taxon>
        <taxon>Eutheria</taxon>
        <taxon>Laurasiatheria</taxon>
        <taxon>Artiodactyla</taxon>
        <taxon>Ruminantia</taxon>
        <taxon>Pecora</taxon>
        <taxon>Bovidae</taxon>
        <taxon>Bovinae</taxon>
        <taxon>Bos</taxon>
    </lineage>
</organism>
<proteinExistence type="evidence at protein level"/>
<sequence>MSQAEFDKAAEEVKHLKTKPADEEMLFIYSHYKQATVGDINTERPGMLDFKGKAKWDAWNELKGTSKEDAMKAYIDKVEELKKKYGI</sequence>
<reference key="1">
    <citation type="journal article" date="1987" name="DNA">
        <title>Bovine and human cDNA sequences encoding a putative benzodiazepine receptor ligand.</title>
        <authorList>
            <person name="Webb N.R."/>
            <person name="Rose T.M."/>
            <person name="Malik N."/>
            <person name="Marquardt H."/>
            <person name="Shoyab M."/>
            <person name="Todaro G.J."/>
            <person name="Lee D.C."/>
        </authorList>
    </citation>
    <scope>NUCLEOTIDE SEQUENCE [MRNA]</scope>
</reference>
<reference key="2">
    <citation type="submission" date="2006-02" db="EMBL/GenBank/DDBJ databases">
        <authorList>
            <consortium name="NIH - Mammalian Gene Collection (MGC) project"/>
        </authorList>
    </citation>
    <scope>NUCLEOTIDE SEQUENCE [LARGE SCALE MRNA]</scope>
    <source>
        <strain>Crossbred X Angus</strain>
        <tissue>Liver</tissue>
    </source>
</reference>
<reference key="3">
    <citation type="journal article" date="1986" name="J. Biol. Chem.">
        <title>Complete amino acid sequences of bovine and human endozepines. Homology with rat diazepam binding inhibitor.</title>
        <authorList>
            <person name="Marquardt H."/>
            <person name="Todaro G.J."/>
            <person name="Shoyab M."/>
        </authorList>
    </citation>
    <scope>PROTEIN SEQUENCE OF 2-87</scope>
    <scope>ACETYLATION AT SER-2</scope>
    <source>
        <tissue>Brain</tissue>
    </source>
</reference>
<reference key="4">
    <citation type="journal article" date="1987" name="Biochem. J.">
        <title>Amino acid sequence of acyl-CoA-binding protein from cow liver.</title>
        <authorList>
            <person name="Mikkelsen J."/>
            <person name="Hoejrup P."/>
            <person name="Nielsen P.F."/>
            <person name="Roepstorff P."/>
            <person name="Knudsen J."/>
        </authorList>
    </citation>
    <scope>PROTEIN SEQUENCE OF 2-87</scope>
    <source>
        <tissue>Liver</tissue>
    </source>
</reference>
<reference key="5">
    <citation type="journal article" date="1992" name="Biochem. J.">
        <title>Purification and characterization of variants of acyl-CoA-binding protein in the bovine liver.</title>
        <authorList>
            <person name="Jensen M.S."/>
            <person name="Hoejrup P."/>
            <person name="Rasmussen J.T."/>
            <person name="Knudsen J."/>
        </authorList>
    </citation>
    <scope>PROTEIN SEQUENCE OF 2-87</scope>
    <source>
        <tissue>Liver</tissue>
    </source>
</reference>
<reference key="6">
    <citation type="journal article" date="2008" name="Biochem. J.">
        <title>Acyl-CoA-binding protein (ACBP) localizes to the endoplasmic reticulum and Golgi in a ligand-dependent manner in mammalian cells.</title>
        <authorList>
            <person name="Hansen J.S."/>
            <person name="Faergeman N.J."/>
            <person name="Kragelund B.B."/>
            <person name="Knudsen J."/>
        </authorList>
    </citation>
    <scope>SUBCELLULAR LOCATION</scope>
</reference>
<reference key="7">
    <citation type="journal article" date="1991" name="Biochemistry">
        <title>The secondary structure in solution of acyl-coenzyme A binding protein from bovine liver using 1H nuclear magnetic resonance spectroscopy.</title>
        <authorList>
            <person name="Andersen K.V."/>
            <person name="Ludvigsen S."/>
            <person name="Mandrup S."/>
            <person name="Knudsen J."/>
            <person name="Poulsen F.M."/>
        </authorList>
    </citation>
    <scope>STRUCTURE BY NMR</scope>
</reference>
<reference key="8">
    <citation type="journal article" date="1992" name="J. Mol. Biol.">
        <title>Three-dimensional structure in solution of acyl-coenzyme A binding protein from bovine liver.</title>
        <authorList>
            <person name="Andersen K.V."/>
            <person name="Poulsen F.M."/>
        </authorList>
    </citation>
    <scope>STRUCTURE BY NMR</scope>
</reference>
<reference key="9">
    <citation type="journal article" date="1993" name="J. Biomol. NMR">
        <title>The three-dimensional structure of acyl-coenzyme A binding protein from bovine liver: structural refinement using heteronuclear multidimensional NMR spectroscopy.</title>
        <authorList>
            <person name="Andersen K.V."/>
            <person name="Poulsen F.M."/>
        </authorList>
    </citation>
    <scope>STRUCTURE BY NMR</scope>
</reference>
<reference key="10">
    <citation type="journal article" date="1993" name="J. Mol. Biol.">
        <title>Three-dimensional structure of the complex between acyl-coenzyme A binding protein and palmitoyl-coenzyme A.</title>
        <authorList>
            <person name="Kragelund B.B."/>
            <person name="Andersen K.V."/>
            <person name="Madsen J.C."/>
            <person name="Knudsen J."/>
            <person name="Poulsen F.M."/>
        </authorList>
    </citation>
    <scope>STRUCTURE BY NMR IN COMPLEX WITH THE ACYL-COA ANALOG COENZYME A AND PALMITIC ACID</scope>
</reference>
<reference key="11">
    <citation type="journal article" date="2001" name="J. Mol. Biol.">
        <title>Binding site differences revealed by crystal structures of Plasmodium falciparum and bovine acyl-CoA binding protein.</title>
        <authorList>
            <person name="van Aalten D.M."/>
            <person name="Milne K.G."/>
            <person name="Zou J.Y."/>
            <person name="Kleywegt G.J."/>
            <person name="Bergfors T."/>
            <person name="Ferguson M.A."/>
            <person name="Knudsen J."/>
            <person name="Jones T.A."/>
        </authorList>
    </citation>
    <scope>X-RAY CRYSTALLOGRAPHY (2.0 ANGSTROMS)</scope>
    <scope>FUNCTION</scope>
</reference>
<reference key="12">
    <citation type="submission" date="2003-02" db="PDB data bank">
        <title>RDC-refined NMR structure of bovine acyl-coenzyme A binding protein, ACBP, in complex with palmitoyl-coenzyme A.</title>
        <authorList>
            <person name="Lerche M.H."/>
            <person name="Kragelund B.B."/>
            <person name="Redfield C."/>
            <person name="Poulsen F.M."/>
        </authorList>
    </citation>
    <scope>STRUCTURE BY NMR IN COMPLEX WITH THE ACYL-COA PALMITOYL-COENZYME A</scope>
</reference>
<comment type="function">
    <text evidence="5">Binds medium- and long-chain acyl-CoA esters with very high affinity and may function as an intracellular carrier of acyl-CoA esters. It is also able to displace diazepam from the benzodiazepine (BZD) recognition site located on the GABA type A receptor. It is therefore possible that this protein also acts as a neuropeptide to modulate the action of the GABA receptor.</text>
</comment>
<comment type="subunit">
    <text evidence="10 11">Monomer.</text>
</comment>
<comment type="subcellular location">
    <subcellularLocation>
        <location evidence="7">Endoplasmic reticulum</location>
    </subcellularLocation>
    <subcellularLocation>
        <location evidence="7">Golgi apparatus</location>
    </subcellularLocation>
    <text evidence="2">Golgi localization is dependent on ligand binding.</text>
</comment>
<comment type="similarity">
    <text evidence="12">Belongs to the ACBP family.</text>
</comment>
<gene>
    <name type="primary">DBI</name>
</gene>
<dbReference type="EMBL" id="M15886">
    <property type="protein sequence ID" value="AAA30495.1"/>
    <property type="molecule type" value="mRNA"/>
</dbReference>
<dbReference type="EMBL" id="BC114181">
    <property type="protein sequence ID" value="AAI14182.1"/>
    <property type="molecule type" value="mRNA"/>
</dbReference>
<dbReference type="PIR" id="A26448">
    <property type="entry name" value="NZBO"/>
</dbReference>
<dbReference type="RefSeq" id="NP_001106792.1">
    <property type="nucleotide sequence ID" value="NM_001113321.1"/>
</dbReference>
<dbReference type="PDB" id="1ACA">
    <property type="method" value="NMR"/>
    <property type="chains" value="A=2-87"/>
</dbReference>
<dbReference type="PDB" id="1HB6">
    <property type="method" value="X-ray"/>
    <property type="resolution" value="2.00 A"/>
    <property type="chains" value="A=2-87"/>
</dbReference>
<dbReference type="PDB" id="1HB8">
    <property type="method" value="X-ray"/>
    <property type="resolution" value="2.00 A"/>
    <property type="chains" value="A/B/C=2-87"/>
</dbReference>
<dbReference type="PDB" id="1NTI">
    <property type="method" value="NMR"/>
    <property type="chains" value="A=2-87"/>
</dbReference>
<dbReference type="PDB" id="1NVL">
    <property type="method" value="NMR"/>
    <property type="chains" value="A=2-87"/>
</dbReference>
<dbReference type="PDB" id="2ABD">
    <property type="method" value="NMR"/>
    <property type="chains" value="A=2-87"/>
</dbReference>
<dbReference type="PDBsum" id="1ACA"/>
<dbReference type="PDBsum" id="1HB6"/>
<dbReference type="PDBsum" id="1HB8"/>
<dbReference type="PDBsum" id="1NTI"/>
<dbReference type="PDBsum" id="1NVL"/>
<dbReference type="PDBsum" id="2ABD"/>
<dbReference type="BMRB" id="P07107"/>
<dbReference type="SMR" id="P07107"/>
<dbReference type="FunCoup" id="P07107">
    <property type="interactions" value="1975"/>
</dbReference>
<dbReference type="STRING" id="9913.ENSBTAP00000066424"/>
<dbReference type="iPTMnet" id="P07107"/>
<dbReference type="PaxDb" id="9913-ENSBTAP00000012523"/>
<dbReference type="PeptideAtlas" id="P07107"/>
<dbReference type="Ensembl" id="ENSBTAT00000012523.4">
    <property type="protein sequence ID" value="ENSBTAP00000012523.3"/>
    <property type="gene ID" value="ENSBTAG00000009517.6"/>
</dbReference>
<dbReference type="GeneID" id="768330"/>
<dbReference type="KEGG" id="bta:768330"/>
<dbReference type="CTD" id="1622"/>
<dbReference type="VEuPathDB" id="HostDB:ENSBTAG00000009517"/>
<dbReference type="VGNC" id="VGNC:27889">
    <property type="gene designation" value="DBI"/>
</dbReference>
<dbReference type="eggNOG" id="KOG0817">
    <property type="taxonomic scope" value="Eukaryota"/>
</dbReference>
<dbReference type="GeneTree" id="ENSGT00940000154846"/>
<dbReference type="HOGENOM" id="CLU_118853_4_1_1"/>
<dbReference type="InParanoid" id="P07107"/>
<dbReference type="OMA" id="WEGKKGM"/>
<dbReference type="OrthoDB" id="346910at2759"/>
<dbReference type="TreeFam" id="TF335802"/>
<dbReference type="Reactome" id="R-BTA-77289">
    <property type="pathway name" value="Mitochondrial Fatty Acid Beta-Oxidation"/>
</dbReference>
<dbReference type="EvolutionaryTrace" id="P07107"/>
<dbReference type="Proteomes" id="UP000009136">
    <property type="component" value="Chromosome 2"/>
</dbReference>
<dbReference type="Bgee" id="ENSBTAG00000009517">
    <property type="expression patterns" value="Expressed in caput epididymis and 105 other cell types or tissues"/>
</dbReference>
<dbReference type="GO" id="GO:0005783">
    <property type="term" value="C:endoplasmic reticulum"/>
    <property type="evidence" value="ECO:0007669"/>
    <property type="project" value="UniProtKB-SubCell"/>
</dbReference>
<dbReference type="GO" id="GO:0005794">
    <property type="term" value="C:Golgi apparatus"/>
    <property type="evidence" value="ECO:0007669"/>
    <property type="project" value="UniProtKB-SubCell"/>
</dbReference>
<dbReference type="GO" id="GO:0000062">
    <property type="term" value="F:fatty-acyl-CoA binding"/>
    <property type="evidence" value="ECO:0000318"/>
    <property type="project" value="GO_Central"/>
</dbReference>
<dbReference type="GO" id="GO:0006631">
    <property type="term" value="P:fatty acid metabolic process"/>
    <property type="evidence" value="ECO:0000318"/>
    <property type="project" value="GO_Central"/>
</dbReference>
<dbReference type="CDD" id="cd00435">
    <property type="entry name" value="ACBP"/>
    <property type="match status" value="1"/>
</dbReference>
<dbReference type="FunFam" id="1.20.80.10:FF:000010">
    <property type="entry name" value="Acyl-CoA-binding domain-containing protein 5"/>
    <property type="match status" value="1"/>
</dbReference>
<dbReference type="Gene3D" id="1.20.80.10">
    <property type="match status" value="1"/>
</dbReference>
<dbReference type="InterPro" id="IPR022408">
    <property type="entry name" value="Acyl-CoA-binding_prot_CS"/>
</dbReference>
<dbReference type="InterPro" id="IPR000582">
    <property type="entry name" value="Acyl-CoA-binding_protein"/>
</dbReference>
<dbReference type="InterPro" id="IPR035984">
    <property type="entry name" value="Acyl-CoA-binding_sf"/>
</dbReference>
<dbReference type="InterPro" id="IPR014352">
    <property type="entry name" value="FERM/acyl-CoA-bd_prot_sf"/>
</dbReference>
<dbReference type="PANTHER" id="PTHR23310:SF54">
    <property type="entry name" value="ACYL-COA-BINDING PROTEIN"/>
    <property type="match status" value="1"/>
</dbReference>
<dbReference type="PANTHER" id="PTHR23310">
    <property type="entry name" value="ACYL-COA-BINDING PROTEIN, ACBP"/>
    <property type="match status" value="1"/>
</dbReference>
<dbReference type="Pfam" id="PF00887">
    <property type="entry name" value="ACBP"/>
    <property type="match status" value="1"/>
</dbReference>
<dbReference type="PRINTS" id="PR00689">
    <property type="entry name" value="ACOABINDINGP"/>
</dbReference>
<dbReference type="SUPFAM" id="SSF47027">
    <property type="entry name" value="Acyl-CoA binding protein"/>
    <property type="match status" value="1"/>
</dbReference>
<dbReference type="PROSITE" id="PS00880">
    <property type="entry name" value="ACB_1"/>
    <property type="match status" value="1"/>
</dbReference>
<dbReference type="PROSITE" id="PS51228">
    <property type="entry name" value="ACB_2"/>
    <property type="match status" value="1"/>
</dbReference>
<feature type="initiator methionine" description="Removed" evidence="6 8 9">
    <location>
        <position position="1"/>
    </location>
</feature>
<feature type="chain" id="PRO_0000214001" description="Acyl-CoA-binding protein">
    <location>
        <begin position="2"/>
        <end position="87"/>
    </location>
</feature>
<feature type="domain" description="ACB" evidence="4">
    <location>
        <begin position="2"/>
        <end position="87"/>
    </location>
</feature>
<feature type="binding site" evidence="10 11 13 14">
    <location>
        <position position="14"/>
    </location>
    <ligand>
        <name>an acyl-CoA</name>
        <dbReference type="ChEBI" id="CHEBI:58342"/>
    </ligand>
</feature>
<feature type="binding site" evidence="10 11 13 14">
    <location>
        <begin position="29"/>
        <end position="33"/>
    </location>
    <ligand>
        <name>an acyl-CoA</name>
        <dbReference type="ChEBI" id="CHEBI:58342"/>
    </ligand>
</feature>
<feature type="binding site" evidence="10 11 13 14">
    <location>
        <position position="51"/>
    </location>
    <ligand>
        <name>an acyl-CoA</name>
        <dbReference type="ChEBI" id="CHEBI:58342"/>
    </ligand>
</feature>
<feature type="binding site" evidence="10 11 13 14">
    <location>
        <position position="55"/>
    </location>
    <ligand>
        <name>an acyl-CoA</name>
        <dbReference type="ChEBI" id="CHEBI:58342"/>
    </ligand>
</feature>
<feature type="binding site" evidence="10 11 13 14">
    <location>
        <position position="74"/>
    </location>
    <ligand>
        <name>an acyl-CoA</name>
        <dbReference type="ChEBI" id="CHEBI:58342"/>
    </ligand>
</feature>
<feature type="modified residue" description="N-acetylserine" evidence="8">
    <location>
        <position position="2"/>
    </location>
</feature>
<feature type="modified residue" description="N6-acetyllysine; alternate" evidence="2">
    <location>
        <position position="8"/>
    </location>
</feature>
<feature type="modified residue" description="N6-succinyllysine; alternate" evidence="3">
    <location>
        <position position="8"/>
    </location>
</feature>
<feature type="modified residue" description="N6-succinyllysine" evidence="3">
    <location>
        <position position="17"/>
    </location>
</feature>
<feature type="modified residue" description="N6-acetyllysine" evidence="2">
    <location>
        <position position="19"/>
    </location>
</feature>
<feature type="modified residue" description="Phosphotyrosine" evidence="2">
    <location>
        <position position="29"/>
    </location>
</feature>
<feature type="modified residue" description="N6-acetyllysine" evidence="3">
    <location>
        <position position="51"/>
    </location>
</feature>
<feature type="modified residue" description="N6-(2-hydroxyisobutyryl)lysine; alternate" evidence="2">
    <location>
        <position position="55"/>
    </location>
</feature>
<feature type="modified residue" description="N6-acetyllysine; alternate" evidence="2">
    <location>
        <position position="55"/>
    </location>
</feature>
<feature type="modified residue" description="N6-malonyllysine; alternate" evidence="1">
    <location>
        <position position="55"/>
    </location>
</feature>
<feature type="modified residue" description="N6-succinyllysine; alternate" evidence="3">
    <location>
        <position position="55"/>
    </location>
</feature>
<feature type="modified residue" description="N6-acetyllysine; alternate" evidence="2">
    <location>
        <position position="77"/>
    </location>
</feature>
<feature type="modified residue" description="N6-succinyllysine; alternate" evidence="3">
    <location>
        <position position="77"/>
    </location>
</feature>
<feature type="helix" evidence="16">
    <location>
        <begin position="3"/>
        <end position="12"/>
    </location>
</feature>
<feature type="helix" evidence="16">
    <location>
        <begin position="13"/>
        <end position="15"/>
    </location>
</feature>
<feature type="strand" evidence="15">
    <location>
        <begin position="16"/>
        <end position="18"/>
    </location>
</feature>
<feature type="helix" evidence="16">
    <location>
        <begin position="22"/>
        <end position="36"/>
    </location>
</feature>
<feature type="helix" evidence="16">
    <location>
        <begin position="50"/>
        <end position="61"/>
    </location>
</feature>
<feature type="turn" evidence="16">
    <location>
        <begin position="62"/>
        <end position="64"/>
    </location>
</feature>
<feature type="helix" evidence="16">
    <location>
        <begin position="67"/>
        <end position="85"/>
    </location>
</feature>
<name>ACBP_BOVIN</name>
<accession>P07107</accession>
<accession>Q29RG9</accession>